<protein>
    <recommendedName>
        <fullName>Coiled-coil domain-containing protein 179</fullName>
    </recommendedName>
</protein>
<organism>
    <name type="scientific">Mus musculus</name>
    <name type="common">Mouse</name>
    <dbReference type="NCBI Taxonomy" id="10090"/>
    <lineage>
        <taxon>Eukaryota</taxon>
        <taxon>Metazoa</taxon>
        <taxon>Chordata</taxon>
        <taxon>Craniata</taxon>
        <taxon>Vertebrata</taxon>
        <taxon>Euteleostomi</taxon>
        <taxon>Mammalia</taxon>
        <taxon>Eutheria</taxon>
        <taxon>Euarchontoglires</taxon>
        <taxon>Glires</taxon>
        <taxon>Rodentia</taxon>
        <taxon>Myomorpha</taxon>
        <taxon>Muroidea</taxon>
        <taxon>Muridae</taxon>
        <taxon>Murinae</taxon>
        <taxon>Mus</taxon>
        <taxon>Mus</taxon>
    </lineage>
</organism>
<dbReference type="EMBL" id="AC113312">
    <property type="status" value="NOT_ANNOTATED_CDS"/>
    <property type="molecule type" value="Genomic_DNA"/>
</dbReference>
<dbReference type="EMBL" id="CH466599">
    <property type="protein sequence ID" value="EDL21888.1"/>
    <property type="molecule type" value="Genomic_DNA"/>
</dbReference>
<dbReference type="CCDS" id="CCDS57552.1"/>
<dbReference type="RefSeq" id="NP_001182530.1">
    <property type="nucleotide sequence ID" value="NM_001195601.1"/>
</dbReference>
<dbReference type="SMR" id="J3QM76"/>
<dbReference type="FunCoup" id="J3QM76">
    <property type="interactions" value="1"/>
</dbReference>
<dbReference type="STRING" id="10090.ENSMUSP00000136157"/>
<dbReference type="iPTMnet" id="J3QM76"/>
<dbReference type="PhosphoSitePlus" id="J3QM76"/>
<dbReference type="PaxDb" id="10090-ENSMUSP00000136157"/>
<dbReference type="ProteomicsDB" id="265585"/>
<dbReference type="Ensembl" id="ENSMUST00000180038.8">
    <property type="protein sequence ID" value="ENSMUSP00000136157.2"/>
    <property type="gene ID" value="ENSMUSG00000094445.8"/>
</dbReference>
<dbReference type="GeneID" id="100503036"/>
<dbReference type="KEGG" id="mmu:100503036"/>
<dbReference type="UCSC" id="uc009hco.2">
    <property type="organism name" value="mouse"/>
</dbReference>
<dbReference type="AGR" id="MGI:1922779"/>
<dbReference type="CTD" id="100500938"/>
<dbReference type="MGI" id="MGI:1922779">
    <property type="gene designation" value="Ccdc179"/>
</dbReference>
<dbReference type="VEuPathDB" id="HostDB:ENSMUSG00000094445"/>
<dbReference type="eggNOG" id="ENOG502TDWU">
    <property type="taxonomic scope" value="Eukaryota"/>
</dbReference>
<dbReference type="GeneTree" id="ENSGT00900000143257"/>
<dbReference type="InParanoid" id="J3QM76"/>
<dbReference type="OMA" id="EKRINYM"/>
<dbReference type="OrthoDB" id="17389at9989"/>
<dbReference type="BioGRID-ORCS" id="100503036">
    <property type="hits" value="3 hits in 75 CRISPR screens"/>
</dbReference>
<dbReference type="ChiTaRS" id="1700015G11Rik">
    <property type="organism name" value="mouse"/>
</dbReference>
<dbReference type="PRO" id="PR:J3QM76"/>
<dbReference type="Proteomes" id="UP000000589">
    <property type="component" value="Chromosome 7"/>
</dbReference>
<dbReference type="RNAct" id="J3QM76">
    <property type="molecule type" value="protein"/>
</dbReference>
<dbReference type="Bgee" id="ENSMUSG00000094445">
    <property type="expression patterns" value="Expressed in spermatid and 26 other cell types or tissues"/>
</dbReference>
<dbReference type="ExpressionAtlas" id="J3QM76">
    <property type="expression patterns" value="baseline and differential"/>
</dbReference>
<evidence type="ECO:0000255" key="1"/>
<evidence type="ECO:0000256" key="2">
    <source>
        <dbReference type="SAM" id="MobiDB-lite"/>
    </source>
</evidence>
<accession>J3QM76</accession>
<gene>
    <name type="primary">Ccdc179</name>
</gene>
<proteinExistence type="predicted"/>
<sequence length="67" mass="7928">MCLRVKDEEPAQVYPEGPRRHHPSDVSTRQSVEKRINYMQNLQKEKRKLGKRFARPNPIPDTGILWT</sequence>
<keyword id="KW-0175">Coiled coil</keyword>
<keyword id="KW-1185">Reference proteome</keyword>
<name>CC179_MOUSE</name>
<reference key="1">
    <citation type="journal article" date="2009" name="PLoS Biol.">
        <title>Lineage-specific biology revealed by a finished genome assembly of the mouse.</title>
        <authorList>
            <person name="Church D.M."/>
            <person name="Goodstadt L."/>
            <person name="Hillier L.W."/>
            <person name="Zody M.C."/>
            <person name="Goldstein S."/>
            <person name="She X."/>
            <person name="Bult C.J."/>
            <person name="Agarwala R."/>
            <person name="Cherry J.L."/>
            <person name="DiCuccio M."/>
            <person name="Hlavina W."/>
            <person name="Kapustin Y."/>
            <person name="Meric P."/>
            <person name="Maglott D."/>
            <person name="Birtle Z."/>
            <person name="Marques A.C."/>
            <person name="Graves T."/>
            <person name="Zhou S."/>
            <person name="Teague B."/>
            <person name="Potamousis K."/>
            <person name="Churas C."/>
            <person name="Place M."/>
            <person name="Herschleb J."/>
            <person name="Runnheim R."/>
            <person name="Forrest D."/>
            <person name="Amos-Landgraf J."/>
            <person name="Schwartz D.C."/>
            <person name="Cheng Z."/>
            <person name="Lindblad-Toh K."/>
            <person name="Eichler E.E."/>
            <person name="Ponting C.P."/>
        </authorList>
    </citation>
    <scope>NUCLEOTIDE SEQUENCE [LARGE SCALE GENOMIC DNA]</scope>
    <source>
        <strain>C57BL/6J</strain>
    </source>
</reference>
<reference key="2">
    <citation type="submission" date="2005-09" db="EMBL/GenBank/DDBJ databases">
        <authorList>
            <person name="Mural R.J."/>
            <person name="Adams M.D."/>
            <person name="Myers E.W."/>
            <person name="Smith H.O."/>
            <person name="Venter J.C."/>
        </authorList>
    </citation>
    <scope>NUCLEOTIDE SEQUENCE [LARGE SCALE GENOMIC DNA]</scope>
</reference>
<feature type="chain" id="PRO_0000421699" description="Coiled-coil domain-containing protein 179">
    <location>
        <begin position="1"/>
        <end position="67"/>
    </location>
</feature>
<feature type="region of interest" description="Disordered" evidence="2">
    <location>
        <begin position="1"/>
        <end position="32"/>
    </location>
</feature>
<feature type="region of interest" description="Disordered" evidence="2">
    <location>
        <begin position="47"/>
        <end position="67"/>
    </location>
</feature>
<feature type="coiled-coil region" evidence="1">
    <location>
        <begin position="27"/>
        <end position="53"/>
    </location>
</feature>